<sequence length="490" mass="52908">MSRMAEQQLYIHGGYTSATSGRTFETINPANGNVLATVQAAGREDVDRAVKSAQQGQKIWAAMTAMERSRILRRAVDILRERNDELAKLETLDTGKAYSETSTVDIVTGADVLEYYAGLIPALEGSQIPLRETSFVYTRREPLGVVAGIGAWNYPIQIALWKSAPALAAGNAMIFKPSEVTPLTALKLAEIYSEAGLPDGVFNVLPGVGAETGQYLTDHPGIAKVSFTGGVASGKKVMANSAASSLKEVTMELGGKSPLIVFDDADLDLAADIAMMANFFSSGQVCTNGTRVFVPTKCKAAFEQKVLARVERIRAGDVFDPQTNFGPLVSFPHRDNVLRYIAKGKEEGARVLCGGNVLKGDSFDNGAWVAPTVFTDCSDDMTIVREEIFGPVMSILTYESEDEVIRRANDTDYGLAAGIVTADLNRAHRVIHQLEAGICWINTWGESPAEIPVGGYKHSGIGRENGVMTLQSYTQVKSIQVEMAKFQSIF</sequence>
<organism>
    <name type="scientific">Escherichia coli O6:H1 (strain CFT073 / ATCC 700928 / UPEC)</name>
    <dbReference type="NCBI Taxonomy" id="199310"/>
    <lineage>
        <taxon>Bacteria</taxon>
        <taxon>Pseudomonadati</taxon>
        <taxon>Pseudomonadota</taxon>
        <taxon>Gammaproteobacteria</taxon>
        <taxon>Enterobacterales</taxon>
        <taxon>Enterobacteriaceae</taxon>
        <taxon>Escherichia</taxon>
    </lineage>
</organism>
<accession>Q8FKI8</accession>
<reference key="1">
    <citation type="journal article" date="2002" name="Proc. Natl. Acad. Sci. U.S.A.">
        <title>Extensive mosaic structure revealed by the complete genome sequence of uropathogenic Escherichia coli.</title>
        <authorList>
            <person name="Welch R.A."/>
            <person name="Burland V."/>
            <person name="Plunkett G. III"/>
            <person name="Redford P."/>
            <person name="Roesch P."/>
            <person name="Rasko D."/>
            <person name="Buckles E.L."/>
            <person name="Liou S.-R."/>
            <person name="Boutin A."/>
            <person name="Hackett J."/>
            <person name="Stroud D."/>
            <person name="Mayhew G.F."/>
            <person name="Rose D.J."/>
            <person name="Zhou S."/>
            <person name="Schwartz D.C."/>
            <person name="Perna N.T."/>
            <person name="Mobley H.L.T."/>
            <person name="Donnenberg M.S."/>
            <person name="Blattner F.R."/>
        </authorList>
    </citation>
    <scope>NUCLEOTIDE SEQUENCE [LARGE SCALE GENOMIC DNA]</scope>
    <source>
        <strain>CFT073 / ATCC 700928 / UPEC</strain>
    </source>
</reference>
<feature type="initiator methionine" description="Removed" evidence="1">
    <location>
        <position position="1"/>
    </location>
</feature>
<feature type="chain" id="PRO_0000056543" description="Betaine aldehyde dehydrogenase">
    <location>
        <begin position="2"/>
        <end position="490"/>
    </location>
</feature>
<feature type="active site" description="Charge relay system" evidence="2">
    <location>
        <position position="162"/>
    </location>
</feature>
<feature type="active site" description="Proton acceptor" evidence="2">
    <location>
        <position position="252"/>
    </location>
</feature>
<feature type="active site" description="Nucleophile" evidence="2">
    <location>
        <position position="286"/>
    </location>
</feature>
<feature type="active site" description="Charge relay system" evidence="2">
    <location>
        <position position="464"/>
    </location>
</feature>
<feature type="binding site" evidence="2">
    <location>
        <position position="26"/>
    </location>
    <ligand>
        <name>K(+)</name>
        <dbReference type="ChEBI" id="CHEBI:29103"/>
        <label>1</label>
    </ligand>
</feature>
<feature type="binding site" evidence="2">
    <location>
        <position position="27"/>
    </location>
    <ligand>
        <name>K(+)</name>
        <dbReference type="ChEBI" id="CHEBI:29103"/>
        <label>1</label>
    </ligand>
</feature>
<feature type="binding site" evidence="2">
    <location>
        <position position="93"/>
    </location>
    <ligand>
        <name>K(+)</name>
        <dbReference type="ChEBI" id="CHEBI:29103"/>
        <label>1</label>
    </ligand>
</feature>
<feature type="binding site" evidence="2">
    <location>
        <begin position="150"/>
        <end position="152"/>
    </location>
    <ligand>
        <name>NAD(+)</name>
        <dbReference type="ChEBI" id="CHEBI:57540"/>
    </ligand>
</feature>
<feature type="binding site" evidence="2">
    <location>
        <begin position="176"/>
        <end position="179"/>
    </location>
    <ligand>
        <name>NAD(+)</name>
        <dbReference type="ChEBI" id="CHEBI:57540"/>
    </ligand>
</feature>
<feature type="binding site" evidence="2">
    <location>
        <position position="180"/>
    </location>
    <ligand>
        <name>K(+)</name>
        <dbReference type="ChEBI" id="CHEBI:29103"/>
        <label>1</label>
    </ligand>
</feature>
<feature type="binding site" evidence="2">
    <location>
        <begin position="230"/>
        <end position="233"/>
    </location>
    <ligand>
        <name>NAD(+)</name>
        <dbReference type="ChEBI" id="CHEBI:57540"/>
    </ligand>
</feature>
<feature type="binding site" evidence="2">
    <location>
        <position position="246"/>
    </location>
    <ligand>
        <name>K(+)</name>
        <dbReference type="ChEBI" id="CHEBI:29103"/>
        <label>2</label>
    </ligand>
</feature>
<feature type="binding site" evidence="2">
    <location>
        <position position="254"/>
    </location>
    <ligand>
        <name>NAD(+)</name>
        <dbReference type="ChEBI" id="CHEBI:57540"/>
    </ligand>
</feature>
<feature type="binding site" description="covalent" evidence="2">
    <location>
        <position position="286"/>
    </location>
    <ligand>
        <name>NAD(+)</name>
        <dbReference type="ChEBI" id="CHEBI:57540"/>
    </ligand>
</feature>
<feature type="binding site" evidence="2">
    <location>
        <position position="387"/>
    </location>
    <ligand>
        <name>NAD(+)</name>
        <dbReference type="ChEBI" id="CHEBI:57540"/>
    </ligand>
</feature>
<feature type="binding site" evidence="2">
    <location>
        <position position="457"/>
    </location>
    <ligand>
        <name>K(+)</name>
        <dbReference type="ChEBI" id="CHEBI:29103"/>
        <label>2</label>
    </ligand>
</feature>
<feature type="binding site" evidence="2">
    <location>
        <position position="460"/>
    </location>
    <ligand>
        <name>K(+)</name>
        <dbReference type="ChEBI" id="CHEBI:29103"/>
        <label>2</label>
    </ligand>
</feature>
<feature type="site" description="Seems to be a necessary countercharge to the potassium cations" evidence="2">
    <location>
        <position position="248"/>
    </location>
</feature>
<feature type="modified residue" description="Cysteine sulfenic acid (-SOH)" evidence="2">
    <location>
        <position position="286"/>
    </location>
</feature>
<proteinExistence type="inferred from homology"/>
<evidence type="ECO:0000250" key="1"/>
<evidence type="ECO:0000255" key="2">
    <source>
        <dbReference type="HAMAP-Rule" id="MF_00804"/>
    </source>
</evidence>
<evidence type="ECO:0000305" key="3"/>
<keyword id="KW-0479">Metal-binding</keyword>
<keyword id="KW-0520">NAD</keyword>
<keyword id="KW-0521">NADP</keyword>
<keyword id="KW-0558">Oxidation</keyword>
<keyword id="KW-0560">Oxidoreductase</keyword>
<keyword id="KW-0630">Potassium</keyword>
<keyword id="KW-1185">Reference proteome</keyword>
<comment type="function">
    <text evidence="2">Involved in the biosynthesis of the osmoprotectant glycine betaine. Catalyzes the irreversible oxidation of betaine aldehyde to the corresponding acid.</text>
</comment>
<comment type="catalytic activity">
    <reaction evidence="2">
        <text>betaine aldehyde + NAD(+) + H2O = glycine betaine + NADH + 2 H(+)</text>
        <dbReference type="Rhea" id="RHEA:15305"/>
        <dbReference type="ChEBI" id="CHEBI:15377"/>
        <dbReference type="ChEBI" id="CHEBI:15378"/>
        <dbReference type="ChEBI" id="CHEBI:15710"/>
        <dbReference type="ChEBI" id="CHEBI:17750"/>
        <dbReference type="ChEBI" id="CHEBI:57540"/>
        <dbReference type="ChEBI" id="CHEBI:57945"/>
        <dbReference type="EC" id="1.2.1.8"/>
    </reaction>
    <physiologicalReaction direction="left-to-right" evidence="2">
        <dbReference type="Rhea" id="RHEA:15306"/>
    </physiologicalReaction>
</comment>
<comment type="cofactor">
    <cofactor evidence="2">
        <name>K(+)</name>
        <dbReference type="ChEBI" id="CHEBI:29103"/>
    </cofactor>
    <text evidence="2">Binds 2 potassium ions per subunit.</text>
</comment>
<comment type="pathway">
    <text evidence="2">Amine and polyamine biosynthesis; betaine biosynthesis via choline pathway; betaine from betaine aldehyde: step 1/1.</text>
</comment>
<comment type="subunit">
    <text evidence="2">Dimer of dimers.</text>
</comment>
<comment type="similarity">
    <text evidence="2">Belongs to the aldehyde dehydrogenase family.</text>
</comment>
<comment type="sequence caution" evidence="3">
    <conflict type="erroneous initiation">
        <sequence resource="EMBL-CDS" id="AAN78913"/>
    </conflict>
    <text>Extended N-terminus.</text>
</comment>
<dbReference type="EC" id="1.2.1.8" evidence="2"/>
<dbReference type="EMBL" id="AE014075">
    <property type="protein sequence ID" value="AAN78913.1"/>
    <property type="status" value="ALT_INIT"/>
    <property type="molecule type" value="Genomic_DNA"/>
</dbReference>
<dbReference type="RefSeq" id="WP_001443225.1">
    <property type="nucleotide sequence ID" value="NZ_CP051263.1"/>
</dbReference>
<dbReference type="SMR" id="Q8FKI8"/>
<dbReference type="STRING" id="199310.c0432"/>
<dbReference type="KEGG" id="ecc:c0432"/>
<dbReference type="eggNOG" id="COG1012">
    <property type="taxonomic scope" value="Bacteria"/>
</dbReference>
<dbReference type="HOGENOM" id="CLU_005391_0_2_6"/>
<dbReference type="UniPathway" id="UPA00529">
    <property type="reaction ID" value="UER00386"/>
</dbReference>
<dbReference type="Proteomes" id="UP000001410">
    <property type="component" value="Chromosome"/>
</dbReference>
<dbReference type="GO" id="GO:0008802">
    <property type="term" value="F:betaine-aldehyde dehydrogenase (NAD+) activity"/>
    <property type="evidence" value="ECO:0007669"/>
    <property type="project" value="UniProtKB-UniRule"/>
</dbReference>
<dbReference type="GO" id="GO:0046872">
    <property type="term" value="F:metal ion binding"/>
    <property type="evidence" value="ECO:0007669"/>
    <property type="project" value="UniProtKB-KW"/>
</dbReference>
<dbReference type="GO" id="GO:0019285">
    <property type="term" value="P:glycine betaine biosynthetic process from choline"/>
    <property type="evidence" value="ECO:0007669"/>
    <property type="project" value="UniProtKB-UniRule"/>
</dbReference>
<dbReference type="CDD" id="cd07090">
    <property type="entry name" value="ALDH_F9_TMBADH"/>
    <property type="match status" value="1"/>
</dbReference>
<dbReference type="FunFam" id="3.40.309.10:FF:000014">
    <property type="entry name" value="NAD/NADP-dependent betaine aldehyde dehydrogenase"/>
    <property type="match status" value="1"/>
</dbReference>
<dbReference type="FunFam" id="3.40.605.10:FF:000007">
    <property type="entry name" value="NAD/NADP-dependent betaine aldehyde dehydrogenase"/>
    <property type="match status" value="1"/>
</dbReference>
<dbReference type="Gene3D" id="3.40.605.10">
    <property type="entry name" value="Aldehyde Dehydrogenase, Chain A, domain 1"/>
    <property type="match status" value="1"/>
</dbReference>
<dbReference type="Gene3D" id="3.40.309.10">
    <property type="entry name" value="Aldehyde Dehydrogenase, Chain A, domain 2"/>
    <property type="match status" value="1"/>
</dbReference>
<dbReference type="HAMAP" id="MF_00804">
    <property type="entry name" value="BADH"/>
    <property type="match status" value="1"/>
</dbReference>
<dbReference type="InterPro" id="IPR016161">
    <property type="entry name" value="Ald_DH/histidinol_DH"/>
</dbReference>
<dbReference type="InterPro" id="IPR016163">
    <property type="entry name" value="Ald_DH_C"/>
</dbReference>
<dbReference type="InterPro" id="IPR016160">
    <property type="entry name" value="Ald_DH_CS_CYS"/>
</dbReference>
<dbReference type="InterPro" id="IPR029510">
    <property type="entry name" value="Ald_DH_CS_GLU"/>
</dbReference>
<dbReference type="InterPro" id="IPR016162">
    <property type="entry name" value="Ald_DH_N"/>
</dbReference>
<dbReference type="InterPro" id="IPR015590">
    <property type="entry name" value="Aldehyde_DH_dom"/>
</dbReference>
<dbReference type="InterPro" id="IPR011264">
    <property type="entry name" value="BADH"/>
</dbReference>
<dbReference type="NCBIfam" id="TIGR01804">
    <property type="entry name" value="BADH"/>
    <property type="match status" value="1"/>
</dbReference>
<dbReference type="NCBIfam" id="NF009725">
    <property type="entry name" value="PRK13252.1"/>
    <property type="match status" value="1"/>
</dbReference>
<dbReference type="PANTHER" id="PTHR11699">
    <property type="entry name" value="ALDEHYDE DEHYDROGENASE-RELATED"/>
    <property type="match status" value="1"/>
</dbReference>
<dbReference type="Pfam" id="PF00171">
    <property type="entry name" value="Aldedh"/>
    <property type="match status" value="1"/>
</dbReference>
<dbReference type="SUPFAM" id="SSF53720">
    <property type="entry name" value="ALDH-like"/>
    <property type="match status" value="1"/>
</dbReference>
<dbReference type="PROSITE" id="PS00070">
    <property type="entry name" value="ALDEHYDE_DEHYDR_CYS"/>
    <property type="match status" value="1"/>
</dbReference>
<dbReference type="PROSITE" id="PS00687">
    <property type="entry name" value="ALDEHYDE_DEHYDR_GLU"/>
    <property type="match status" value="1"/>
</dbReference>
<name>BETB_ECOL6</name>
<gene>
    <name evidence="2" type="primary">betB</name>
    <name type="ordered locus">c0432</name>
</gene>
<protein>
    <recommendedName>
        <fullName evidence="2">Betaine aldehyde dehydrogenase</fullName>
        <shortName evidence="2">BADH</shortName>
        <ecNumber evidence="2">1.2.1.8</ecNumber>
    </recommendedName>
</protein>